<protein>
    <recommendedName>
        <fullName evidence="1">HTH-type transcriptional regulator YidZ</fullName>
    </recommendedName>
</protein>
<feature type="chain" id="PRO_1000148203" description="HTH-type transcriptional regulator YidZ">
    <location>
        <begin position="1"/>
        <end position="319"/>
    </location>
</feature>
<feature type="domain" description="HTH lysR-type" evidence="1">
    <location>
        <begin position="8"/>
        <end position="65"/>
    </location>
</feature>
<feature type="DNA-binding region" description="H-T-H motif" evidence="1">
    <location>
        <begin position="25"/>
        <end position="44"/>
    </location>
</feature>
<reference key="1">
    <citation type="journal article" date="2011" name="J. Bacteriol.">
        <title>Comparative genomics of 28 Salmonella enterica isolates: evidence for CRISPR-mediated adaptive sublineage evolution.</title>
        <authorList>
            <person name="Fricke W.F."/>
            <person name="Mammel M.K."/>
            <person name="McDermott P.F."/>
            <person name="Tartera C."/>
            <person name="White D.G."/>
            <person name="Leclerc J.E."/>
            <person name="Ravel J."/>
            <person name="Cebula T.A."/>
        </authorList>
    </citation>
    <scope>NUCLEOTIDE SEQUENCE [LARGE SCALE GENOMIC DNA]</scope>
    <source>
        <strain>CVM19633</strain>
    </source>
</reference>
<gene>
    <name evidence="1" type="primary">yidZ</name>
    <name type="ordered locus">SeSA_A4057</name>
</gene>
<name>YIDZ_SALSV</name>
<comment type="function">
    <text evidence="1">Involved in anaerobic NO protection.</text>
</comment>
<comment type="similarity">
    <text evidence="2">Belongs to the LysR transcriptional regulatory family.</text>
</comment>
<keyword id="KW-0238">DNA-binding</keyword>
<keyword id="KW-0804">Transcription</keyword>
<keyword id="KW-0805">Transcription regulation</keyword>
<evidence type="ECO:0000255" key="1">
    <source>
        <dbReference type="HAMAP-Rule" id="MF_01607"/>
    </source>
</evidence>
<evidence type="ECO:0000305" key="2"/>
<sequence length="319" mass="37084">MKKSLTNLDLNLLLCLQLLMQERSVTKAAKRMNVTPSAVSKSLAKLRAWFDDPLFVNTPLGLAPTPLMVSMEQSLADWMQMGNQLLDKPHHQTPRGLKFELAAESPLMMIMFNSLSQQIYQRYPQATIKVRNWDYDSLEAITRGEVDIGFTGRESHPRSRELLSLLPLAIDFEVLFSDLPWVWLREDHPALREAWDLDTFLRYPHISICWEQSDTWALDDVLQEMGRKRHIALSLPGFEQSLFMAAQPDHTLIATAPRYCQHYNQLHQLPLVARPLPFDAQQREKLMVPFTLLWHKRNSHNPKIVWLRQAINTLCRRLI</sequence>
<proteinExistence type="inferred from homology"/>
<organism>
    <name type="scientific">Salmonella schwarzengrund (strain CVM19633)</name>
    <dbReference type="NCBI Taxonomy" id="439843"/>
    <lineage>
        <taxon>Bacteria</taxon>
        <taxon>Pseudomonadati</taxon>
        <taxon>Pseudomonadota</taxon>
        <taxon>Gammaproteobacteria</taxon>
        <taxon>Enterobacterales</taxon>
        <taxon>Enterobacteriaceae</taxon>
        <taxon>Salmonella</taxon>
    </lineage>
</organism>
<dbReference type="EMBL" id="CP001127">
    <property type="protein sequence ID" value="ACF92654.1"/>
    <property type="molecule type" value="Genomic_DNA"/>
</dbReference>
<dbReference type="RefSeq" id="WP_000749365.1">
    <property type="nucleotide sequence ID" value="NC_011094.1"/>
</dbReference>
<dbReference type="SMR" id="B4TN13"/>
<dbReference type="KEGG" id="sew:SeSA_A4057"/>
<dbReference type="HOGENOM" id="CLU_039613_39_2_6"/>
<dbReference type="Proteomes" id="UP000001865">
    <property type="component" value="Chromosome"/>
</dbReference>
<dbReference type="GO" id="GO:0003677">
    <property type="term" value="F:DNA binding"/>
    <property type="evidence" value="ECO:0007669"/>
    <property type="project" value="UniProtKB-KW"/>
</dbReference>
<dbReference type="GO" id="GO:0003700">
    <property type="term" value="F:DNA-binding transcription factor activity"/>
    <property type="evidence" value="ECO:0007669"/>
    <property type="project" value="UniProtKB-UniRule"/>
</dbReference>
<dbReference type="CDD" id="cd08417">
    <property type="entry name" value="PBP2_Nitroaromatics_like"/>
    <property type="match status" value="1"/>
</dbReference>
<dbReference type="Gene3D" id="3.40.190.10">
    <property type="entry name" value="Periplasmic binding protein-like II"/>
    <property type="match status" value="2"/>
</dbReference>
<dbReference type="Gene3D" id="1.10.10.10">
    <property type="entry name" value="Winged helix-like DNA-binding domain superfamily/Winged helix DNA-binding domain"/>
    <property type="match status" value="1"/>
</dbReference>
<dbReference type="HAMAP" id="MF_01607">
    <property type="entry name" value="HTH_type_YidZ"/>
    <property type="match status" value="1"/>
</dbReference>
<dbReference type="InterPro" id="IPR050389">
    <property type="entry name" value="LysR-type_TF"/>
</dbReference>
<dbReference type="InterPro" id="IPR005119">
    <property type="entry name" value="LysR_subst-bd"/>
</dbReference>
<dbReference type="InterPro" id="IPR000847">
    <property type="entry name" value="Tscrpt_reg_HTH_LysR"/>
</dbReference>
<dbReference type="InterPro" id="IPR023746">
    <property type="entry name" value="Tscrpt_reg_YidZ"/>
</dbReference>
<dbReference type="InterPro" id="IPR036388">
    <property type="entry name" value="WH-like_DNA-bd_sf"/>
</dbReference>
<dbReference type="InterPro" id="IPR036390">
    <property type="entry name" value="WH_DNA-bd_sf"/>
</dbReference>
<dbReference type="InterPro" id="IPR037402">
    <property type="entry name" value="YidZ_PBP2"/>
</dbReference>
<dbReference type="NCBIfam" id="NF007581">
    <property type="entry name" value="PRK10216.1"/>
    <property type="match status" value="1"/>
</dbReference>
<dbReference type="PANTHER" id="PTHR30118">
    <property type="entry name" value="HTH-TYPE TRANSCRIPTIONAL REGULATOR LEUO-RELATED"/>
    <property type="match status" value="1"/>
</dbReference>
<dbReference type="PANTHER" id="PTHR30118:SF11">
    <property type="entry name" value="HTH-TYPE TRANSCRIPTIONAL REGULATOR YIDZ"/>
    <property type="match status" value="1"/>
</dbReference>
<dbReference type="Pfam" id="PF00126">
    <property type="entry name" value="HTH_1"/>
    <property type="match status" value="1"/>
</dbReference>
<dbReference type="Pfam" id="PF03466">
    <property type="entry name" value="LysR_substrate"/>
    <property type="match status" value="1"/>
</dbReference>
<dbReference type="SUPFAM" id="SSF53850">
    <property type="entry name" value="Periplasmic binding protein-like II"/>
    <property type="match status" value="1"/>
</dbReference>
<dbReference type="SUPFAM" id="SSF46785">
    <property type="entry name" value="Winged helix' DNA-binding domain"/>
    <property type="match status" value="1"/>
</dbReference>
<dbReference type="PROSITE" id="PS50931">
    <property type="entry name" value="HTH_LYSR"/>
    <property type="match status" value="1"/>
</dbReference>
<accession>B4TN13</accession>